<dbReference type="EC" id="6.1.1.23" evidence="1"/>
<dbReference type="EMBL" id="CP000489">
    <property type="protein sequence ID" value="ABL70275.1"/>
    <property type="molecule type" value="Genomic_DNA"/>
</dbReference>
<dbReference type="RefSeq" id="WP_011748470.1">
    <property type="nucleotide sequence ID" value="NC_008686.1"/>
</dbReference>
<dbReference type="SMR" id="A1B431"/>
<dbReference type="STRING" id="318586.Pden_2183"/>
<dbReference type="EnsemblBacteria" id="ABL70275">
    <property type="protein sequence ID" value="ABL70275"/>
    <property type="gene ID" value="Pden_2183"/>
</dbReference>
<dbReference type="GeneID" id="93450580"/>
<dbReference type="KEGG" id="pde:Pden_2183"/>
<dbReference type="eggNOG" id="COG0173">
    <property type="taxonomic scope" value="Bacteria"/>
</dbReference>
<dbReference type="HOGENOM" id="CLU_014330_3_2_5"/>
<dbReference type="OrthoDB" id="9802326at2"/>
<dbReference type="Proteomes" id="UP000000361">
    <property type="component" value="Chromosome 1"/>
</dbReference>
<dbReference type="GO" id="GO:0005737">
    <property type="term" value="C:cytoplasm"/>
    <property type="evidence" value="ECO:0007669"/>
    <property type="project" value="UniProtKB-SubCell"/>
</dbReference>
<dbReference type="GO" id="GO:0004815">
    <property type="term" value="F:aspartate-tRNA ligase activity"/>
    <property type="evidence" value="ECO:0007669"/>
    <property type="project" value="UniProtKB-UniRule"/>
</dbReference>
<dbReference type="GO" id="GO:0050560">
    <property type="term" value="F:aspartate-tRNA(Asn) ligase activity"/>
    <property type="evidence" value="ECO:0007669"/>
    <property type="project" value="UniProtKB-EC"/>
</dbReference>
<dbReference type="GO" id="GO:0005524">
    <property type="term" value="F:ATP binding"/>
    <property type="evidence" value="ECO:0007669"/>
    <property type="project" value="UniProtKB-UniRule"/>
</dbReference>
<dbReference type="GO" id="GO:0003676">
    <property type="term" value="F:nucleic acid binding"/>
    <property type="evidence" value="ECO:0007669"/>
    <property type="project" value="InterPro"/>
</dbReference>
<dbReference type="GO" id="GO:0006422">
    <property type="term" value="P:aspartyl-tRNA aminoacylation"/>
    <property type="evidence" value="ECO:0007669"/>
    <property type="project" value="UniProtKB-UniRule"/>
</dbReference>
<dbReference type="CDD" id="cd00777">
    <property type="entry name" value="AspRS_core"/>
    <property type="match status" value="1"/>
</dbReference>
<dbReference type="CDD" id="cd04317">
    <property type="entry name" value="EcAspRS_like_N"/>
    <property type="match status" value="1"/>
</dbReference>
<dbReference type="Gene3D" id="3.30.930.10">
    <property type="entry name" value="Bira Bifunctional Protein, Domain 2"/>
    <property type="match status" value="1"/>
</dbReference>
<dbReference type="Gene3D" id="3.30.1360.30">
    <property type="entry name" value="GAD-like domain"/>
    <property type="match status" value="1"/>
</dbReference>
<dbReference type="Gene3D" id="2.40.50.140">
    <property type="entry name" value="Nucleic acid-binding proteins"/>
    <property type="match status" value="1"/>
</dbReference>
<dbReference type="HAMAP" id="MF_00044">
    <property type="entry name" value="Asp_tRNA_synth_type1"/>
    <property type="match status" value="1"/>
</dbReference>
<dbReference type="InterPro" id="IPR004364">
    <property type="entry name" value="Aa-tRNA-synt_II"/>
</dbReference>
<dbReference type="InterPro" id="IPR006195">
    <property type="entry name" value="aa-tRNA-synth_II"/>
</dbReference>
<dbReference type="InterPro" id="IPR045864">
    <property type="entry name" value="aa-tRNA-synth_II/BPL/LPL"/>
</dbReference>
<dbReference type="InterPro" id="IPR004524">
    <property type="entry name" value="Asp-tRNA-ligase_1"/>
</dbReference>
<dbReference type="InterPro" id="IPR047089">
    <property type="entry name" value="Asp-tRNA-ligase_1_N"/>
</dbReference>
<dbReference type="InterPro" id="IPR002312">
    <property type="entry name" value="Asp/Asn-tRNA-synth_IIb"/>
</dbReference>
<dbReference type="InterPro" id="IPR047090">
    <property type="entry name" value="AspRS_core"/>
</dbReference>
<dbReference type="InterPro" id="IPR004115">
    <property type="entry name" value="GAD-like_sf"/>
</dbReference>
<dbReference type="InterPro" id="IPR029351">
    <property type="entry name" value="GAD_dom"/>
</dbReference>
<dbReference type="InterPro" id="IPR012340">
    <property type="entry name" value="NA-bd_OB-fold"/>
</dbReference>
<dbReference type="InterPro" id="IPR004365">
    <property type="entry name" value="NA-bd_OB_tRNA"/>
</dbReference>
<dbReference type="NCBIfam" id="TIGR00459">
    <property type="entry name" value="aspS_bact"/>
    <property type="match status" value="1"/>
</dbReference>
<dbReference type="NCBIfam" id="NF001750">
    <property type="entry name" value="PRK00476.1"/>
    <property type="match status" value="1"/>
</dbReference>
<dbReference type="PANTHER" id="PTHR22594:SF5">
    <property type="entry name" value="ASPARTATE--TRNA LIGASE, MITOCHONDRIAL"/>
    <property type="match status" value="1"/>
</dbReference>
<dbReference type="PANTHER" id="PTHR22594">
    <property type="entry name" value="ASPARTYL/LYSYL-TRNA SYNTHETASE"/>
    <property type="match status" value="1"/>
</dbReference>
<dbReference type="Pfam" id="PF02938">
    <property type="entry name" value="GAD"/>
    <property type="match status" value="1"/>
</dbReference>
<dbReference type="Pfam" id="PF00152">
    <property type="entry name" value="tRNA-synt_2"/>
    <property type="match status" value="1"/>
</dbReference>
<dbReference type="Pfam" id="PF01336">
    <property type="entry name" value="tRNA_anti-codon"/>
    <property type="match status" value="1"/>
</dbReference>
<dbReference type="PRINTS" id="PR01042">
    <property type="entry name" value="TRNASYNTHASP"/>
</dbReference>
<dbReference type="SUPFAM" id="SSF55681">
    <property type="entry name" value="Class II aaRS and biotin synthetases"/>
    <property type="match status" value="1"/>
</dbReference>
<dbReference type="SUPFAM" id="SSF55261">
    <property type="entry name" value="GAD domain-like"/>
    <property type="match status" value="1"/>
</dbReference>
<dbReference type="SUPFAM" id="SSF50249">
    <property type="entry name" value="Nucleic acid-binding proteins"/>
    <property type="match status" value="1"/>
</dbReference>
<dbReference type="PROSITE" id="PS50862">
    <property type="entry name" value="AA_TRNA_LIGASE_II"/>
    <property type="match status" value="1"/>
</dbReference>
<sequence>MSAYRSHTCGELTAAAAGSEIRLSGWVHRVRDHGGVLFIDLRDHYGITQVIADSDSLAFAALEKLRAETVIRIDGRVKLRDPSLVNPKLPTGEIEVYATAMEVLGAADDLPLPVFGDQDYPEETRLTYRFLDLRRESLHNNIMLRSRVVKWLRDAMWDQGFTEFQTPIITASSPEGARDFLVPSRLHPGKFYALPQAPQQFKQLIMVAGFDKYFQIAPCFRDEDPRADRSPTDFYQLDLEMSFVEQEDVFRAIQPVIQGLFEEFGGGRRVDTDWPRIPYAEAMLKYGSDKPDLRNPIEMQVVSDHFRGSGFAIFAKLLEQDGTEVRAIPAPGGGSRKFADRMNAFAQGQGLPGMGYIFWRKAEDGTTEAAGPIAKALGPEKTEAIRTQLGLGEGDAAFFLGGKPETFEAVAGRARNEIGRELGLIDENQFKFAWIVDFPMYEKGEDGRIDFSHNPFSMPQGGLDALEGDPLAVMGYQYDLACNGYELVSGAIRNHRPEIMFRAFELAGYGRDEVEKRFGGMVKAFRYGAPPHGGCAAGIDRIVMLLADEVNIREVIMFPMNQRAEDLMMGAPSEPTNEQLRELRLRVLPRE</sequence>
<protein>
    <recommendedName>
        <fullName evidence="1">Aspartate--tRNA(Asp/Asn) ligase</fullName>
        <ecNumber evidence="1">6.1.1.23</ecNumber>
    </recommendedName>
    <alternativeName>
        <fullName evidence="1">Aspartyl-tRNA synthetase</fullName>
        <shortName evidence="1">AspRS</shortName>
    </alternativeName>
    <alternativeName>
        <fullName evidence="1">Non-discriminating aspartyl-tRNA synthetase</fullName>
        <shortName evidence="1">ND-AspRS</shortName>
    </alternativeName>
</protein>
<organism>
    <name type="scientific">Paracoccus denitrificans (strain Pd 1222)</name>
    <dbReference type="NCBI Taxonomy" id="318586"/>
    <lineage>
        <taxon>Bacteria</taxon>
        <taxon>Pseudomonadati</taxon>
        <taxon>Pseudomonadota</taxon>
        <taxon>Alphaproteobacteria</taxon>
        <taxon>Rhodobacterales</taxon>
        <taxon>Paracoccaceae</taxon>
        <taxon>Paracoccus</taxon>
    </lineage>
</organism>
<reference key="1">
    <citation type="submission" date="2006-12" db="EMBL/GenBank/DDBJ databases">
        <title>Complete sequence of chromosome 1 of Paracoccus denitrificans PD1222.</title>
        <authorList>
            <person name="Copeland A."/>
            <person name="Lucas S."/>
            <person name="Lapidus A."/>
            <person name="Barry K."/>
            <person name="Detter J.C."/>
            <person name="Glavina del Rio T."/>
            <person name="Hammon N."/>
            <person name="Israni S."/>
            <person name="Dalin E."/>
            <person name="Tice H."/>
            <person name="Pitluck S."/>
            <person name="Munk A.C."/>
            <person name="Brettin T."/>
            <person name="Bruce D."/>
            <person name="Han C."/>
            <person name="Tapia R."/>
            <person name="Gilna P."/>
            <person name="Schmutz J."/>
            <person name="Larimer F."/>
            <person name="Land M."/>
            <person name="Hauser L."/>
            <person name="Kyrpides N."/>
            <person name="Lykidis A."/>
            <person name="Spiro S."/>
            <person name="Richardson D.J."/>
            <person name="Moir J.W.B."/>
            <person name="Ferguson S.J."/>
            <person name="van Spanning R.J.M."/>
            <person name="Richardson P."/>
        </authorList>
    </citation>
    <scope>NUCLEOTIDE SEQUENCE [LARGE SCALE GENOMIC DNA]</scope>
    <source>
        <strain>Pd 1222</strain>
    </source>
</reference>
<comment type="function">
    <text evidence="1">Aspartyl-tRNA synthetase with relaxed tRNA specificity since it is able to aspartylate not only its cognate tRNA(Asp) but also tRNA(Asn). Reaction proceeds in two steps: L-aspartate is first activated by ATP to form Asp-AMP and then transferred to the acceptor end of tRNA(Asp/Asn).</text>
</comment>
<comment type="catalytic activity">
    <reaction evidence="1">
        <text>tRNA(Asx) + L-aspartate + ATP = L-aspartyl-tRNA(Asx) + AMP + diphosphate</text>
        <dbReference type="Rhea" id="RHEA:18349"/>
        <dbReference type="Rhea" id="RHEA-COMP:9710"/>
        <dbReference type="Rhea" id="RHEA-COMP:9711"/>
        <dbReference type="ChEBI" id="CHEBI:29991"/>
        <dbReference type="ChEBI" id="CHEBI:30616"/>
        <dbReference type="ChEBI" id="CHEBI:33019"/>
        <dbReference type="ChEBI" id="CHEBI:78442"/>
        <dbReference type="ChEBI" id="CHEBI:78516"/>
        <dbReference type="ChEBI" id="CHEBI:456215"/>
        <dbReference type="EC" id="6.1.1.23"/>
    </reaction>
</comment>
<comment type="subunit">
    <text evidence="1">Homodimer.</text>
</comment>
<comment type="subcellular location">
    <subcellularLocation>
        <location evidence="1">Cytoplasm</location>
    </subcellularLocation>
</comment>
<comment type="similarity">
    <text evidence="1">Belongs to the class-II aminoacyl-tRNA synthetase family. Type 1 subfamily.</text>
</comment>
<evidence type="ECO:0000255" key="1">
    <source>
        <dbReference type="HAMAP-Rule" id="MF_00044"/>
    </source>
</evidence>
<keyword id="KW-0030">Aminoacyl-tRNA synthetase</keyword>
<keyword id="KW-0067">ATP-binding</keyword>
<keyword id="KW-0963">Cytoplasm</keyword>
<keyword id="KW-0436">Ligase</keyword>
<keyword id="KW-0547">Nucleotide-binding</keyword>
<keyword id="KW-0648">Protein biosynthesis</keyword>
<keyword id="KW-1185">Reference proteome</keyword>
<proteinExistence type="inferred from homology"/>
<feature type="chain" id="PRO_1000006721" description="Aspartate--tRNA(Asp/Asn) ligase">
    <location>
        <begin position="1"/>
        <end position="591"/>
    </location>
</feature>
<feature type="region of interest" description="Aspartate" evidence="1">
    <location>
        <begin position="199"/>
        <end position="202"/>
    </location>
</feature>
<feature type="binding site" evidence="1">
    <location>
        <position position="175"/>
    </location>
    <ligand>
        <name>L-aspartate</name>
        <dbReference type="ChEBI" id="CHEBI:29991"/>
    </ligand>
</feature>
<feature type="binding site" evidence="1">
    <location>
        <begin position="221"/>
        <end position="223"/>
    </location>
    <ligand>
        <name>ATP</name>
        <dbReference type="ChEBI" id="CHEBI:30616"/>
    </ligand>
</feature>
<feature type="binding site" evidence="1">
    <location>
        <position position="221"/>
    </location>
    <ligand>
        <name>L-aspartate</name>
        <dbReference type="ChEBI" id="CHEBI:29991"/>
    </ligand>
</feature>
<feature type="binding site" evidence="1">
    <location>
        <position position="453"/>
    </location>
    <ligand>
        <name>L-aspartate</name>
        <dbReference type="ChEBI" id="CHEBI:29991"/>
    </ligand>
</feature>
<feature type="binding site" evidence="1">
    <location>
        <position position="486"/>
    </location>
    <ligand>
        <name>ATP</name>
        <dbReference type="ChEBI" id="CHEBI:30616"/>
    </ligand>
</feature>
<feature type="binding site" evidence="1">
    <location>
        <position position="493"/>
    </location>
    <ligand>
        <name>L-aspartate</name>
        <dbReference type="ChEBI" id="CHEBI:29991"/>
    </ligand>
</feature>
<feature type="binding site" evidence="1">
    <location>
        <begin position="538"/>
        <end position="541"/>
    </location>
    <ligand>
        <name>ATP</name>
        <dbReference type="ChEBI" id="CHEBI:30616"/>
    </ligand>
</feature>
<feature type="site" description="Important for tRNA non-discrimination" evidence="1">
    <location>
        <position position="33"/>
    </location>
</feature>
<name>SYDND_PARDP</name>
<accession>A1B431</accession>
<gene>
    <name evidence="1" type="primary">aspS</name>
    <name type="ordered locus">Pden_2183</name>
</gene>